<name>RSMH_RICCN</name>
<organism>
    <name type="scientific">Rickettsia conorii (strain ATCC VR-613 / Malish 7)</name>
    <dbReference type="NCBI Taxonomy" id="272944"/>
    <lineage>
        <taxon>Bacteria</taxon>
        <taxon>Pseudomonadati</taxon>
        <taxon>Pseudomonadota</taxon>
        <taxon>Alphaproteobacteria</taxon>
        <taxon>Rickettsiales</taxon>
        <taxon>Rickettsiaceae</taxon>
        <taxon>Rickettsieae</taxon>
        <taxon>Rickettsia</taxon>
        <taxon>spotted fever group</taxon>
    </lineage>
</organism>
<dbReference type="EC" id="2.1.1.199" evidence="1"/>
<dbReference type="EMBL" id="AE006914">
    <property type="protein sequence ID" value="AAL03395.1"/>
    <property type="molecule type" value="Genomic_DNA"/>
</dbReference>
<dbReference type="PIR" id="A97807">
    <property type="entry name" value="A97807"/>
</dbReference>
<dbReference type="RefSeq" id="WP_010977463.1">
    <property type="nucleotide sequence ID" value="NC_003103.1"/>
</dbReference>
<dbReference type="SMR" id="Q92HB4"/>
<dbReference type="GeneID" id="927821"/>
<dbReference type="KEGG" id="rco:RC0857"/>
<dbReference type="PATRIC" id="fig|272944.4.peg.976"/>
<dbReference type="HOGENOM" id="CLU_038422_1_1_5"/>
<dbReference type="Proteomes" id="UP000000816">
    <property type="component" value="Chromosome"/>
</dbReference>
<dbReference type="GO" id="GO:0005737">
    <property type="term" value="C:cytoplasm"/>
    <property type="evidence" value="ECO:0007669"/>
    <property type="project" value="UniProtKB-SubCell"/>
</dbReference>
<dbReference type="GO" id="GO:0071424">
    <property type="term" value="F:rRNA (cytosine-N4-)-methyltransferase activity"/>
    <property type="evidence" value="ECO:0007669"/>
    <property type="project" value="UniProtKB-UniRule"/>
</dbReference>
<dbReference type="GO" id="GO:0070475">
    <property type="term" value="P:rRNA base methylation"/>
    <property type="evidence" value="ECO:0007669"/>
    <property type="project" value="UniProtKB-UniRule"/>
</dbReference>
<dbReference type="CDD" id="cd02440">
    <property type="entry name" value="AdoMet_MTases"/>
    <property type="match status" value="1"/>
</dbReference>
<dbReference type="FunFam" id="1.10.150.170:FF:000003">
    <property type="entry name" value="Ribosomal RNA small subunit methyltransferase H"/>
    <property type="match status" value="1"/>
</dbReference>
<dbReference type="Gene3D" id="1.10.150.170">
    <property type="entry name" value="Putative methyltransferase TM0872, insert domain"/>
    <property type="match status" value="1"/>
</dbReference>
<dbReference type="Gene3D" id="3.40.50.150">
    <property type="entry name" value="Vaccinia Virus protein VP39"/>
    <property type="match status" value="1"/>
</dbReference>
<dbReference type="HAMAP" id="MF_01007">
    <property type="entry name" value="16SrRNA_methyltr_H"/>
    <property type="match status" value="1"/>
</dbReference>
<dbReference type="InterPro" id="IPR002903">
    <property type="entry name" value="RsmH"/>
</dbReference>
<dbReference type="InterPro" id="IPR023397">
    <property type="entry name" value="SAM-dep_MeTrfase_MraW_recog"/>
</dbReference>
<dbReference type="InterPro" id="IPR029063">
    <property type="entry name" value="SAM-dependent_MTases_sf"/>
</dbReference>
<dbReference type="NCBIfam" id="TIGR00006">
    <property type="entry name" value="16S rRNA (cytosine(1402)-N(4))-methyltransferase RsmH"/>
    <property type="match status" value="1"/>
</dbReference>
<dbReference type="PANTHER" id="PTHR11265:SF0">
    <property type="entry name" value="12S RRNA N4-METHYLCYTIDINE METHYLTRANSFERASE"/>
    <property type="match status" value="1"/>
</dbReference>
<dbReference type="PANTHER" id="PTHR11265">
    <property type="entry name" value="S-ADENOSYL-METHYLTRANSFERASE MRAW"/>
    <property type="match status" value="1"/>
</dbReference>
<dbReference type="Pfam" id="PF01795">
    <property type="entry name" value="Methyltransf_5"/>
    <property type="match status" value="1"/>
</dbReference>
<dbReference type="PIRSF" id="PIRSF004486">
    <property type="entry name" value="MraW"/>
    <property type="match status" value="1"/>
</dbReference>
<dbReference type="SUPFAM" id="SSF81799">
    <property type="entry name" value="Putative methyltransferase TM0872, insert domain"/>
    <property type="match status" value="1"/>
</dbReference>
<dbReference type="SUPFAM" id="SSF53335">
    <property type="entry name" value="S-adenosyl-L-methionine-dependent methyltransferases"/>
    <property type="match status" value="1"/>
</dbReference>
<sequence length="307" mass="34690">MIQSHVSVMLNEMLEALSPKAGESYLDCTFGAGGYSKAILESCNCYVTALDRDPNVIKRAEEIQQHYGERFDFVETNFADSFAKLKEKKFDGIVLDLGVSSMQLDIADRGFSFLHDGPLDMRMSGQGLSAEEFVNAAEEKELADVIYKYGDESFSRRIAKRIVEYRKTARIDSTSKLAEIVRSSIGFRKGKIDPATKTFQAIRIYVNDELGELEQFLVNVKNILKKDGRLVVVSFHSLEDRIVKNFFKENSEKPVVRSKYAKDDMTIDPNKWLKIITNKALAPSDKEVGLNIRARSAKLRAAKAIYE</sequence>
<evidence type="ECO:0000255" key="1">
    <source>
        <dbReference type="HAMAP-Rule" id="MF_01007"/>
    </source>
</evidence>
<feature type="chain" id="PRO_0000108693" description="Ribosomal RNA small subunit methyltransferase H">
    <location>
        <begin position="1"/>
        <end position="307"/>
    </location>
</feature>
<feature type="binding site" evidence="1">
    <location>
        <begin position="33"/>
        <end position="35"/>
    </location>
    <ligand>
        <name>S-adenosyl-L-methionine</name>
        <dbReference type="ChEBI" id="CHEBI:59789"/>
    </ligand>
</feature>
<feature type="binding site" evidence="1">
    <location>
        <position position="51"/>
    </location>
    <ligand>
        <name>S-adenosyl-L-methionine</name>
        <dbReference type="ChEBI" id="CHEBI:59789"/>
    </ligand>
</feature>
<feature type="binding site" evidence="1">
    <location>
        <position position="78"/>
    </location>
    <ligand>
        <name>S-adenosyl-L-methionine</name>
        <dbReference type="ChEBI" id="CHEBI:59789"/>
    </ligand>
</feature>
<feature type="binding site" evidence="1">
    <location>
        <position position="96"/>
    </location>
    <ligand>
        <name>S-adenosyl-L-methionine</name>
        <dbReference type="ChEBI" id="CHEBI:59789"/>
    </ligand>
</feature>
<feature type="binding site" evidence="1">
    <location>
        <position position="103"/>
    </location>
    <ligand>
        <name>S-adenosyl-L-methionine</name>
        <dbReference type="ChEBI" id="CHEBI:59789"/>
    </ligand>
</feature>
<proteinExistence type="inferred from homology"/>
<gene>
    <name evidence="1" type="primary">rsmH</name>
    <name type="synonym">mraW</name>
    <name type="ordered locus">RC0857</name>
</gene>
<comment type="function">
    <text evidence="1">Specifically methylates the N4 position of cytidine in position 1402 (C1402) of 16S rRNA.</text>
</comment>
<comment type="catalytic activity">
    <reaction evidence="1">
        <text>cytidine(1402) in 16S rRNA + S-adenosyl-L-methionine = N(4)-methylcytidine(1402) in 16S rRNA + S-adenosyl-L-homocysteine + H(+)</text>
        <dbReference type="Rhea" id="RHEA:42928"/>
        <dbReference type="Rhea" id="RHEA-COMP:10286"/>
        <dbReference type="Rhea" id="RHEA-COMP:10287"/>
        <dbReference type="ChEBI" id="CHEBI:15378"/>
        <dbReference type="ChEBI" id="CHEBI:57856"/>
        <dbReference type="ChEBI" id="CHEBI:59789"/>
        <dbReference type="ChEBI" id="CHEBI:74506"/>
        <dbReference type="ChEBI" id="CHEBI:82748"/>
        <dbReference type="EC" id="2.1.1.199"/>
    </reaction>
</comment>
<comment type="subcellular location">
    <subcellularLocation>
        <location evidence="1">Cytoplasm</location>
    </subcellularLocation>
</comment>
<comment type="similarity">
    <text evidence="1">Belongs to the methyltransferase superfamily. RsmH family.</text>
</comment>
<protein>
    <recommendedName>
        <fullName evidence="1">Ribosomal RNA small subunit methyltransferase H</fullName>
        <ecNumber evidence="1">2.1.1.199</ecNumber>
    </recommendedName>
    <alternativeName>
        <fullName evidence="1">16S rRNA m(4)C1402 methyltransferase</fullName>
    </alternativeName>
    <alternativeName>
        <fullName evidence="1">rRNA (cytosine-N(4)-)-methyltransferase RsmH</fullName>
    </alternativeName>
</protein>
<reference key="1">
    <citation type="journal article" date="2001" name="Science">
        <title>Mechanisms of evolution in Rickettsia conorii and R. prowazekii.</title>
        <authorList>
            <person name="Ogata H."/>
            <person name="Audic S."/>
            <person name="Renesto-Audiffren P."/>
            <person name="Fournier P.-E."/>
            <person name="Barbe V."/>
            <person name="Samson D."/>
            <person name="Roux V."/>
            <person name="Cossart P."/>
            <person name="Weissenbach J."/>
            <person name="Claverie J.-M."/>
            <person name="Raoult D."/>
        </authorList>
    </citation>
    <scope>NUCLEOTIDE SEQUENCE [LARGE SCALE GENOMIC DNA]</scope>
    <source>
        <strain>ATCC VR-613 / Malish 7</strain>
    </source>
</reference>
<keyword id="KW-0963">Cytoplasm</keyword>
<keyword id="KW-0489">Methyltransferase</keyword>
<keyword id="KW-0698">rRNA processing</keyword>
<keyword id="KW-0949">S-adenosyl-L-methionine</keyword>
<keyword id="KW-0808">Transferase</keyword>
<accession>Q92HB4</accession>